<protein>
    <recommendedName>
        <fullName evidence="1">GTPase Obg</fullName>
        <ecNumber evidence="1">3.6.5.-</ecNumber>
    </recommendedName>
    <alternativeName>
        <fullName evidence="1">GTP-binding protein Obg</fullName>
    </alternativeName>
</protein>
<proteinExistence type="inferred from homology"/>
<name>OBG_RICCN</name>
<gene>
    <name evidence="1" type="primary">obg</name>
    <name type="ordered locus">RC1307</name>
</gene>
<keyword id="KW-0963">Cytoplasm</keyword>
<keyword id="KW-0342">GTP-binding</keyword>
<keyword id="KW-0378">Hydrolase</keyword>
<keyword id="KW-0460">Magnesium</keyword>
<keyword id="KW-0479">Metal-binding</keyword>
<keyword id="KW-0547">Nucleotide-binding</keyword>
<evidence type="ECO:0000255" key="1">
    <source>
        <dbReference type="HAMAP-Rule" id="MF_01454"/>
    </source>
</evidence>
<evidence type="ECO:0000255" key="2">
    <source>
        <dbReference type="PROSITE-ProRule" id="PRU01231"/>
    </source>
</evidence>
<evidence type="ECO:0000305" key="3"/>
<reference key="1">
    <citation type="journal article" date="2001" name="Science">
        <title>Mechanisms of evolution in Rickettsia conorii and R. prowazekii.</title>
        <authorList>
            <person name="Ogata H."/>
            <person name="Audic S."/>
            <person name="Renesto-Audiffren P."/>
            <person name="Fournier P.-E."/>
            <person name="Barbe V."/>
            <person name="Samson D."/>
            <person name="Roux V."/>
            <person name="Cossart P."/>
            <person name="Weissenbach J."/>
            <person name="Claverie J.-M."/>
            <person name="Raoult D."/>
        </authorList>
    </citation>
    <scope>NUCLEOTIDE SEQUENCE [LARGE SCALE GENOMIC DNA]</scope>
    <source>
        <strain>ATCC VR-613 / Malish 7</strain>
    </source>
</reference>
<dbReference type="EC" id="3.6.5.-" evidence="1"/>
<dbReference type="EMBL" id="AE006914">
    <property type="protein sequence ID" value="AAL03845.1"/>
    <property type="status" value="ALT_INIT"/>
    <property type="molecule type" value="Genomic_DNA"/>
</dbReference>
<dbReference type="PIR" id="C97863">
    <property type="entry name" value="C97863"/>
</dbReference>
<dbReference type="SMR" id="Q92G19"/>
<dbReference type="GeneID" id="928459"/>
<dbReference type="KEGG" id="rco:RC1307"/>
<dbReference type="PATRIC" id="fig|272944.4.peg.1500"/>
<dbReference type="HOGENOM" id="CLU_011747_2_0_5"/>
<dbReference type="Proteomes" id="UP000000816">
    <property type="component" value="Chromosome"/>
</dbReference>
<dbReference type="GO" id="GO:0005737">
    <property type="term" value="C:cytoplasm"/>
    <property type="evidence" value="ECO:0007669"/>
    <property type="project" value="UniProtKB-SubCell"/>
</dbReference>
<dbReference type="GO" id="GO:0005525">
    <property type="term" value="F:GTP binding"/>
    <property type="evidence" value="ECO:0007669"/>
    <property type="project" value="UniProtKB-UniRule"/>
</dbReference>
<dbReference type="GO" id="GO:0003924">
    <property type="term" value="F:GTPase activity"/>
    <property type="evidence" value="ECO:0007669"/>
    <property type="project" value="UniProtKB-UniRule"/>
</dbReference>
<dbReference type="GO" id="GO:0000287">
    <property type="term" value="F:magnesium ion binding"/>
    <property type="evidence" value="ECO:0007669"/>
    <property type="project" value="InterPro"/>
</dbReference>
<dbReference type="GO" id="GO:0042254">
    <property type="term" value="P:ribosome biogenesis"/>
    <property type="evidence" value="ECO:0007669"/>
    <property type="project" value="UniProtKB-UniRule"/>
</dbReference>
<dbReference type="CDD" id="cd01898">
    <property type="entry name" value="Obg"/>
    <property type="match status" value="1"/>
</dbReference>
<dbReference type="FunFam" id="2.70.210.12:FF:000001">
    <property type="entry name" value="GTPase Obg"/>
    <property type="match status" value="1"/>
</dbReference>
<dbReference type="Gene3D" id="2.70.210.12">
    <property type="entry name" value="GTP1/OBG domain"/>
    <property type="match status" value="1"/>
</dbReference>
<dbReference type="Gene3D" id="3.40.50.300">
    <property type="entry name" value="P-loop containing nucleotide triphosphate hydrolases"/>
    <property type="match status" value="1"/>
</dbReference>
<dbReference type="HAMAP" id="MF_01454">
    <property type="entry name" value="GTPase_Obg"/>
    <property type="match status" value="1"/>
</dbReference>
<dbReference type="InterPro" id="IPR031167">
    <property type="entry name" value="G_OBG"/>
</dbReference>
<dbReference type="InterPro" id="IPR006073">
    <property type="entry name" value="GTP-bd"/>
</dbReference>
<dbReference type="InterPro" id="IPR014100">
    <property type="entry name" value="GTP-bd_Obg/CgtA"/>
</dbReference>
<dbReference type="InterPro" id="IPR006074">
    <property type="entry name" value="GTP1-OBG_CS"/>
</dbReference>
<dbReference type="InterPro" id="IPR006169">
    <property type="entry name" value="GTP1_OBG_dom"/>
</dbReference>
<dbReference type="InterPro" id="IPR036726">
    <property type="entry name" value="GTP1_OBG_dom_sf"/>
</dbReference>
<dbReference type="InterPro" id="IPR045086">
    <property type="entry name" value="OBG_GTPase"/>
</dbReference>
<dbReference type="InterPro" id="IPR027417">
    <property type="entry name" value="P-loop_NTPase"/>
</dbReference>
<dbReference type="NCBIfam" id="TIGR02729">
    <property type="entry name" value="Obg_CgtA"/>
    <property type="match status" value="1"/>
</dbReference>
<dbReference type="NCBIfam" id="NF008955">
    <property type="entry name" value="PRK12297.1"/>
    <property type="match status" value="1"/>
</dbReference>
<dbReference type="NCBIfam" id="NF008956">
    <property type="entry name" value="PRK12299.1"/>
    <property type="match status" value="1"/>
</dbReference>
<dbReference type="PANTHER" id="PTHR11702">
    <property type="entry name" value="DEVELOPMENTALLY REGULATED GTP-BINDING PROTEIN-RELATED"/>
    <property type="match status" value="1"/>
</dbReference>
<dbReference type="PANTHER" id="PTHR11702:SF31">
    <property type="entry name" value="MITOCHONDRIAL RIBOSOME-ASSOCIATED GTPASE 2"/>
    <property type="match status" value="1"/>
</dbReference>
<dbReference type="Pfam" id="PF01018">
    <property type="entry name" value="GTP1_OBG"/>
    <property type="match status" value="1"/>
</dbReference>
<dbReference type="Pfam" id="PF01926">
    <property type="entry name" value="MMR_HSR1"/>
    <property type="match status" value="1"/>
</dbReference>
<dbReference type="PIRSF" id="PIRSF002401">
    <property type="entry name" value="GTP_bd_Obg/CgtA"/>
    <property type="match status" value="1"/>
</dbReference>
<dbReference type="PRINTS" id="PR00326">
    <property type="entry name" value="GTP1OBG"/>
</dbReference>
<dbReference type="SUPFAM" id="SSF82051">
    <property type="entry name" value="Obg GTP-binding protein N-terminal domain"/>
    <property type="match status" value="1"/>
</dbReference>
<dbReference type="SUPFAM" id="SSF52540">
    <property type="entry name" value="P-loop containing nucleoside triphosphate hydrolases"/>
    <property type="match status" value="1"/>
</dbReference>
<dbReference type="PROSITE" id="PS51710">
    <property type="entry name" value="G_OBG"/>
    <property type="match status" value="1"/>
</dbReference>
<dbReference type="PROSITE" id="PS00905">
    <property type="entry name" value="GTP1_OBG"/>
    <property type="match status" value="1"/>
</dbReference>
<dbReference type="PROSITE" id="PS51883">
    <property type="entry name" value="OBG"/>
    <property type="match status" value="1"/>
</dbReference>
<feature type="chain" id="PRO_0000386202" description="GTPase Obg">
    <location>
        <begin position="1"/>
        <end position="330"/>
    </location>
</feature>
<feature type="domain" description="Obg" evidence="2">
    <location>
        <begin position="1"/>
        <end position="159"/>
    </location>
</feature>
<feature type="domain" description="OBG-type G" evidence="1">
    <location>
        <begin position="160"/>
        <end position="327"/>
    </location>
</feature>
<feature type="binding site" evidence="1">
    <location>
        <begin position="166"/>
        <end position="173"/>
    </location>
    <ligand>
        <name>GTP</name>
        <dbReference type="ChEBI" id="CHEBI:37565"/>
    </ligand>
</feature>
<feature type="binding site" evidence="1">
    <location>
        <position position="173"/>
    </location>
    <ligand>
        <name>Mg(2+)</name>
        <dbReference type="ChEBI" id="CHEBI:18420"/>
    </ligand>
</feature>
<feature type="binding site" evidence="1">
    <location>
        <begin position="191"/>
        <end position="195"/>
    </location>
    <ligand>
        <name>GTP</name>
        <dbReference type="ChEBI" id="CHEBI:37565"/>
    </ligand>
</feature>
<feature type="binding site" evidence="1">
    <location>
        <position position="193"/>
    </location>
    <ligand>
        <name>Mg(2+)</name>
        <dbReference type="ChEBI" id="CHEBI:18420"/>
    </ligand>
</feature>
<feature type="binding site" evidence="1">
    <location>
        <begin position="212"/>
        <end position="215"/>
    </location>
    <ligand>
        <name>GTP</name>
        <dbReference type="ChEBI" id="CHEBI:37565"/>
    </ligand>
</feature>
<feature type="binding site" evidence="1">
    <location>
        <begin position="279"/>
        <end position="282"/>
    </location>
    <ligand>
        <name>GTP</name>
        <dbReference type="ChEBI" id="CHEBI:37565"/>
    </ligand>
</feature>
<feature type="binding site" evidence="1">
    <location>
        <begin position="308"/>
        <end position="310"/>
    </location>
    <ligand>
        <name>GTP</name>
        <dbReference type="ChEBI" id="CHEBI:37565"/>
    </ligand>
</feature>
<organism>
    <name type="scientific">Rickettsia conorii (strain ATCC VR-613 / Malish 7)</name>
    <dbReference type="NCBI Taxonomy" id="272944"/>
    <lineage>
        <taxon>Bacteria</taxon>
        <taxon>Pseudomonadati</taxon>
        <taxon>Pseudomonadota</taxon>
        <taxon>Alphaproteobacteria</taxon>
        <taxon>Rickettsiales</taxon>
        <taxon>Rickettsiaceae</taxon>
        <taxon>Rickettsieae</taxon>
        <taxon>Rickettsia</taxon>
        <taxon>spotted fever group</taxon>
    </lineage>
</organism>
<accession>Q92G19</accession>
<sequence length="330" mass="36226">MHFIDEVKIYIKGGNGGNGCVSFHREKFIDRGGPDGGDGGRGGSVIFRSNHHLNTLVNYRYKQHFTAENGENGKDSNRSGKSGKSLVLDVPIGTQIFSEDGNILFYDFTVDDQSFEIIKGGSGGLGNSHFKSSVNQAPRKRTEGEIAEEMWIHLSLKLLSDVGLVGLPNAGKSTFLSVVTAAKPKIADYPFTTLVPNLGVVYVDDEEFVIADIPGLIEGAHQGHGLGDKFLKHIERCNVLIHLIDGSSNDVVADYNTVRLELELYSDYLKNKIETICLNKCDVLTDEEIQEKINKLQKATNKEIFPISTCTNAGVNKIVKLALETIKNQK</sequence>
<comment type="function">
    <text evidence="1">An essential GTPase which binds GTP, GDP and possibly (p)ppGpp with moderate affinity, with high nucleotide exchange rates and a fairly low GTP hydrolysis rate. Plays a role in control of the cell cycle, stress response, ribosome biogenesis and in those bacteria that undergo differentiation, in morphogenesis control.</text>
</comment>
<comment type="cofactor">
    <cofactor evidence="1">
        <name>Mg(2+)</name>
        <dbReference type="ChEBI" id="CHEBI:18420"/>
    </cofactor>
</comment>
<comment type="subunit">
    <text evidence="1">Monomer.</text>
</comment>
<comment type="subcellular location">
    <subcellularLocation>
        <location evidence="1">Cytoplasm</location>
    </subcellularLocation>
</comment>
<comment type="similarity">
    <text evidence="1">Belongs to the TRAFAC class OBG-HflX-like GTPase superfamily. OBG GTPase family.</text>
</comment>
<comment type="sequence caution" evidence="3">
    <conflict type="erroneous initiation">
        <sequence resource="EMBL-CDS" id="AAL03845"/>
    </conflict>
    <text>Extended N-terminus.</text>
</comment>